<comment type="function">
    <text evidence="1">This protein specifically catalyzes the removal of signal peptides from prolipoproteins.</text>
</comment>
<comment type="catalytic activity">
    <reaction evidence="1">
        <text>Release of signal peptides from bacterial membrane prolipoproteins. Hydrolyzes -Xaa-Yaa-Zaa-|-(S,diacylglyceryl)Cys-, in which Xaa is hydrophobic (preferably Leu), and Yaa (Ala or Ser) and Zaa (Gly or Ala) have small, neutral side chains.</text>
        <dbReference type="EC" id="3.4.23.36"/>
    </reaction>
</comment>
<comment type="pathway">
    <text evidence="1">Protein modification; lipoprotein biosynthesis (signal peptide cleavage).</text>
</comment>
<comment type="subcellular location">
    <subcellularLocation>
        <location evidence="1">Cell inner membrane</location>
        <topology evidence="1">Multi-pass membrane protein</topology>
    </subcellularLocation>
</comment>
<comment type="similarity">
    <text evidence="1">Belongs to the peptidase A8 family.</text>
</comment>
<gene>
    <name evidence="1" type="primary">lspA</name>
    <name type="ordered locus">BRE_476</name>
</gene>
<dbReference type="EC" id="3.4.23.36" evidence="1"/>
<dbReference type="EMBL" id="CP000993">
    <property type="protein sequence ID" value="ACH94708.1"/>
    <property type="molecule type" value="Genomic_DNA"/>
</dbReference>
<dbReference type="RefSeq" id="WP_012538225.1">
    <property type="nucleotide sequence ID" value="NZ_CP169983.1"/>
</dbReference>
<dbReference type="SMR" id="B5RRS4"/>
<dbReference type="KEGG" id="bre:BRE_476"/>
<dbReference type="HOGENOM" id="CLU_083252_3_1_12"/>
<dbReference type="UniPathway" id="UPA00665"/>
<dbReference type="Proteomes" id="UP000000612">
    <property type="component" value="Chromosome"/>
</dbReference>
<dbReference type="GO" id="GO:0005886">
    <property type="term" value="C:plasma membrane"/>
    <property type="evidence" value="ECO:0007669"/>
    <property type="project" value="UniProtKB-SubCell"/>
</dbReference>
<dbReference type="GO" id="GO:0004190">
    <property type="term" value="F:aspartic-type endopeptidase activity"/>
    <property type="evidence" value="ECO:0007669"/>
    <property type="project" value="UniProtKB-UniRule"/>
</dbReference>
<dbReference type="GO" id="GO:0006508">
    <property type="term" value="P:proteolysis"/>
    <property type="evidence" value="ECO:0007669"/>
    <property type="project" value="UniProtKB-KW"/>
</dbReference>
<dbReference type="HAMAP" id="MF_00161">
    <property type="entry name" value="LspA"/>
    <property type="match status" value="1"/>
</dbReference>
<dbReference type="InterPro" id="IPR001872">
    <property type="entry name" value="Peptidase_A8"/>
</dbReference>
<dbReference type="NCBIfam" id="TIGR00077">
    <property type="entry name" value="lspA"/>
    <property type="match status" value="1"/>
</dbReference>
<dbReference type="PANTHER" id="PTHR33695">
    <property type="entry name" value="LIPOPROTEIN SIGNAL PEPTIDASE"/>
    <property type="match status" value="1"/>
</dbReference>
<dbReference type="PANTHER" id="PTHR33695:SF1">
    <property type="entry name" value="LIPOPROTEIN SIGNAL PEPTIDASE"/>
    <property type="match status" value="1"/>
</dbReference>
<dbReference type="Pfam" id="PF01252">
    <property type="entry name" value="Peptidase_A8"/>
    <property type="match status" value="1"/>
</dbReference>
<dbReference type="PRINTS" id="PR00781">
    <property type="entry name" value="LIPOSIGPTASE"/>
</dbReference>
<dbReference type="PROSITE" id="PS00855">
    <property type="entry name" value="SPASE_II"/>
    <property type="match status" value="1"/>
</dbReference>
<keyword id="KW-0064">Aspartyl protease</keyword>
<keyword id="KW-0997">Cell inner membrane</keyword>
<keyword id="KW-1003">Cell membrane</keyword>
<keyword id="KW-0378">Hydrolase</keyword>
<keyword id="KW-0472">Membrane</keyword>
<keyword id="KW-0645">Protease</keyword>
<keyword id="KW-0812">Transmembrane</keyword>
<keyword id="KW-1133">Transmembrane helix</keyword>
<accession>B5RRS4</accession>
<evidence type="ECO:0000255" key="1">
    <source>
        <dbReference type="HAMAP-Rule" id="MF_00161"/>
    </source>
</evidence>
<organism>
    <name type="scientific">Borrelia recurrentis (strain A1)</name>
    <dbReference type="NCBI Taxonomy" id="412418"/>
    <lineage>
        <taxon>Bacteria</taxon>
        <taxon>Pseudomonadati</taxon>
        <taxon>Spirochaetota</taxon>
        <taxon>Spirochaetia</taxon>
        <taxon>Spirochaetales</taxon>
        <taxon>Borreliaceae</taxon>
        <taxon>Borrelia</taxon>
    </lineage>
</organism>
<proteinExistence type="inferred from homology"/>
<feature type="chain" id="PRO_1000097233" description="Lipoprotein signal peptidase">
    <location>
        <begin position="1"/>
        <end position="170"/>
    </location>
</feature>
<feature type="transmembrane region" description="Helical" evidence="1">
    <location>
        <begin position="13"/>
        <end position="33"/>
    </location>
</feature>
<feature type="transmembrane region" description="Helical" evidence="1">
    <location>
        <begin position="72"/>
        <end position="92"/>
    </location>
</feature>
<feature type="transmembrane region" description="Helical" evidence="1">
    <location>
        <begin position="96"/>
        <end position="113"/>
    </location>
</feature>
<feature type="transmembrane region" description="Helical" evidence="1">
    <location>
        <begin position="116"/>
        <end position="136"/>
    </location>
</feature>
<feature type="transmembrane region" description="Helical" evidence="1">
    <location>
        <begin position="142"/>
        <end position="162"/>
    </location>
</feature>
<feature type="active site" evidence="1">
    <location>
        <position position="124"/>
    </location>
</feature>
<feature type="active site" evidence="1">
    <location>
        <position position="146"/>
    </location>
</feature>
<sequence>MNINRNRLVSNLIFISILVFFDQWSKYLVVTYVRLGTEYLSFFGDLFKIIHVRNTGVLFSLGSNIDSSLKNLFFLIIPIIILVFVFSFSLKENNKVSRFALILILSGGIGNIIDRLFRPLGVVDFLDVKFFGIFGLQRWPTFNFADSYVVVGMIVFIIYDLFTKDKSTNL</sequence>
<reference key="1">
    <citation type="journal article" date="2008" name="PLoS Genet.">
        <title>The genome of Borrelia recurrentis, the agent of deadly louse-borne relapsing fever, is a degraded subset of tick-borne Borrelia duttonii.</title>
        <authorList>
            <person name="Lescot M."/>
            <person name="Audic S."/>
            <person name="Robert C."/>
            <person name="Nguyen T.T."/>
            <person name="Blanc G."/>
            <person name="Cutler S.J."/>
            <person name="Wincker P."/>
            <person name="Couloux A."/>
            <person name="Claverie J.-M."/>
            <person name="Raoult D."/>
            <person name="Drancourt M."/>
        </authorList>
    </citation>
    <scope>NUCLEOTIDE SEQUENCE [LARGE SCALE GENOMIC DNA]</scope>
    <source>
        <strain>A1</strain>
    </source>
</reference>
<protein>
    <recommendedName>
        <fullName evidence="1">Lipoprotein signal peptidase</fullName>
        <ecNumber evidence="1">3.4.23.36</ecNumber>
    </recommendedName>
    <alternativeName>
        <fullName evidence="1">Prolipoprotein signal peptidase</fullName>
    </alternativeName>
    <alternativeName>
        <fullName evidence="1">Signal peptidase II</fullName>
        <shortName evidence="1">SPase II</shortName>
    </alternativeName>
</protein>
<name>LSPA_BORRA</name>